<reference key="1">
    <citation type="journal article" date="1998" name="Nature">
        <title>The complete genome of the hyperthermophilic bacterium Aquifex aeolicus.</title>
        <authorList>
            <person name="Deckert G."/>
            <person name="Warren P.V."/>
            <person name="Gaasterland T."/>
            <person name="Young W.G."/>
            <person name="Lenox A.L."/>
            <person name="Graham D.E."/>
            <person name="Overbeek R."/>
            <person name="Snead M.A."/>
            <person name="Keller M."/>
            <person name="Aujay M."/>
            <person name="Huber R."/>
            <person name="Feldman R.A."/>
            <person name="Short J.M."/>
            <person name="Olsen G.J."/>
            <person name="Swanson R.V."/>
        </authorList>
    </citation>
    <scope>NUCLEOTIDE SEQUENCE [LARGE SCALE GENOMIC DNA]</scope>
    <source>
        <strain>VF5</strain>
    </source>
</reference>
<sequence length="216" mass="24872">MKKVRKLYEGKAKIVYETDEKDKLILEFKDVATAFDGVKKEEIKGKGSLNNEISSLIFEILEDHGIKTHYIKKLSDREMLVWRAERFPVEVVVRNYAAGSFVKRYGVKEGTKLEQPLVEFFMKSDELHDPMVCINHIKVLKLAPAELVPEMEKIALKVNEILKKIFEEKGILLVDFKLEFGRLPSGELAIVDEISPDSMRLWDKSTGENWIKTDSV</sequence>
<comment type="catalytic activity">
    <reaction>
        <text>5-amino-1-(5-phospho-D-ribosyl)imidazole-4-carboxylate + L-aspartate + ATP = (2S)-2-[5-amino-1-(5-phospho-beta-D-ribosyl)imidazole-4-carboxamido]succinate + ADP + phosphate + 2 H(+)</text>
        <dbReference type="Rhea" id="RHEA:22628"/>
        <dbReference type="ChEBI" id="CHEBI:15378"/>
        <dbReference type="ChEBI" id="CHEBI:29991"/>
        <dbReference type="ChEBI" id="CHEBI:30616"/>
        <dbReference type="ChEBI" id="CHEBI:43474"/>
        <dbReference type="ChEBI" id="CHEBI:58443"/>
        <dbReference type="ChEBI" id="CHEBI:77657"/>
        <dbReference type="ChEBI" id="CHEBI:456216"/>
        <dbReference type="EC" id="6.3.2.6"/>
    </reaction>
</comment>
<comment type="pathway">
    <text>Purine metabolism; IMP biosynthesis via de novo pathway; 5-amino-1-(5-phospho-D-ribosyl)imidazole-4-carboxamide from 5-amino-1-(5-phospho-D-ribosyl)imidazole-4-carboxylate: step 1/2.</text>
</comment>
<comment type="similarity">
    <text evidence="1">Belongs to the SAICAR synthetase family.</text>
</comment>
<organism>
    <name type="scientific">Aquifex aeolicus (strain VF5)</name>
    <dbReference type="NCBI Taxonomy" id="224324"/>
    <lineage>
        <taxon>Bacteria</taxon>
        <taxon>Pseudomonadati</taxon>
        <taxon>Aquificota</taxon>
        <taxon>Aquificia</taxon>
        <taxon>Aquificales</taxon>
        <taxon>Aquificaceae</taxon>
        <taxon>Aquifex</taxon>
    </lineage>
</organism>
<protein>
    <recommendedName>
        <fullName>Phosphoribosylaminoimidazole-succinocarboxamide synthase</fullName>
        <ecNumber>6.3.2.6</ecNumber>
    </recommendedName>
    <alternativeName>
        <fullName>SAICAR synthetase</fullName>
    </alternativeName>
</protein>
<name>PUR7_AQUAE</name>
<keyword id="KW-0067">ATP-binding</keyword>
<keyword id="KW-0436">Ligase</keyword>
<keyword id="KW-0547">Nucleotide-binding</keyword>
<keyword id="KW-0658">Purine biosynthesis</keyword>
<keyword id="KW-1185">Reference proteome</keyword>
<feature type="chain" id="PRO_0000100797" description="Phosphoribosylaminoimidazole-succinocarboxamide synthase">
    <location>
        <begin position="1"/>
        <end position="216"/>
    </location>
</feature>
<evidence type="ECO:0000305" key="1"/>
<accession>O67881</accession>
<proteinExistence type="inferred from homology"/>
<gene>
    <name type="primary">purC</name>
    <name type="ordered locus">aq_2117</name>
</gene>
<dbReference type="EC" id="6.3.2.6"/>
<dbReference type="EMBL" id="AE000657">
    <property type="protein sequence ID" value="AAC07849.1"/>
    <property type="molecule type" value="Genomic_DNA"/>
</dbReference>
<dbReference type="PIR" id="E70481">
    <property type="entry name" value="E70481"/>
</dbReference>
<dbReference type="RefSeq" id="NP_214450.1">
    <property type="nucleotide sequence ID" value="NC_000918.1"/>
</dbReference>
<dbReference type="RefSeq" id="WP_010881386.1">
    <property type="nucleotide sequence ID" value="NC_000918.1"/>
</dbReference>
<dbReference type="SMR" id="O67881"/>
<dbReference type="FunCoup" id="O67881">
    <property type="interactions" value="405"/>
</dbReference>
<dbReference type="STRING" id="224324.aq_2117"/>
<dbReference type="EnsemblBacteria" id="AAC07849">
    <property type="protein sequence ID" value="AAC07849"/>
    <property type="gene ID" value="aq_2117"/>
</dbReference>
<dbReference type="KEGG" id="aae:aq_2117"/>
<dbReference type="PATRIC" id="fig|224324.8.peg.1633"/>
<dbReference type="eggNOG" id="COG0152">
    <property type="taxonomic scope" value="Bacteria"/>
</dbReference>
<dbReference type="HOGENOM" id="CLU_061495_2_0_0"/>
<dbReference type="InParanoid" id="O67881"/>
<dbReference type="OrthoDB" id="9801549at2"/>
<dbReference type="UniPathway" id="UPA00074">
    <property type="reaction ID" value="UER00131"/>
</dbReference>
<dbReference type="Proteomes" id="UP000000798">
    <property type="component" value="Chromosome"/>
</dbReference>
<dbReference type="GO" id="GO:0005524">
    <property type="term" value="F:ATP binding"/>
    <property type="evidence" value="ECO:0007669"/>
    <property type="project" value="UniProtKB-KW"/>
</dbReference>
<dbReference type="GO" id="GO:0004639">
    <property type="term" value="F:phosphoribosylaminoimidazolesuccinocarboxamide synthase activity"/>
    <property type="evidence" value="ECO:0007669"/>
    <property type="project" value="UniProtKB-UniRule"/>
</dbReference>
<dbReference type="GO" id="GO:0006189">
    <property type="term" value="P:'de novo' IMP biosynthetic process"/>
    <property type="evidence" value="ECO:0007669"/>
    <property type="project" value="UniProtKB-UniRule"/>
</dbReference>
<dbReference type="GO" id="GO:0009236">
    <property type="term" value="P:cobalamin biosynthetic process"/>
    <property type="evidence" value="ECO:0007669"/>
    <property type="project" value="InterPro"/>
</dbReference>
<dbReference type="CDD" id="cd01415">
    <property type="entry name" value="SAICAR_synt_PurC"/>
    <property type="match status" value="1"/>
</dbReference>
<dbReference type="FunFam" id="3.30.200.20:FF:000086">
    <property type="entry name" value="Phosphoribosylaminoimidazole-succinocarboxamide synthase"/>
    <property type="match status" value="1"/>
</dbReference>
<dbReference type="FunFam" id="3.30.470.20:FF:000006">
    <property type="entry name" value="Phosphoribosylaminoimidazole-succinocarboxamide synthase"/>
    <property type="match status" value="1"/>
</dbReference>
<dbReference type="Gene3D" id="3.30.470.20">
    <property type="entry name" value="ATP-grasp fold, B domain"/>
    <property type="match status" value="1"/>
</dbReference>
<dbReference type="Gene3D" id="3.30.200.20">
    <property type="entry name" value="Phosphorylase Kinase, domain 1"/>
    <property type="match status" value="1"/>
</dbReference>
<dbReference type="HAMAP" id="MF_00137">
    <property type="entry name" value="SAICAR_synth"/>
    <property type="match status" value="1"/>
</dbReference>
<dbReference type="InterPro" id="IPR028923">
    <property type="entry name" value="SAICAR_synt/ADE2_N"/>
</dbReference>
<dbReference type="InterPro" id="IPR033934">
    <property type="entry name" value="SAICAR_synt_PurC"/>
</dbReference>
<dbReference type="InterPro" id="IPR001636">
    <property type="entry name" value="SAICAR_synth"/>
</dbReference>
<dbReference type="InterPro" id="IPR050089">
    <property type="entry name" value="SAICAR_synthetase"/>
</dbReference>
<dbReference type="InterPro" id="IPR018236">
    <property type="entry name" value="SAICAR_synthetase_CS"/>
</dbReference>
<dbReference type="NCBIfam" id="TIGR00081">
    <property type="entry name" value="purC"/>
    <property type="match status" value="1"/>
</dbReference>
<dbReference type="PANTHER" id="PTHR43599">
    <property type="entry name" value="MULTIFUNCTIONAL PROTEIN ADE2"/>
    <property type="match status" value="1"/>
</dbReference>
<dbReference type="PANTHER" id="PTHR43599:SF3">
    <property type="entry name" value="SI:DKEY-6E2.2"/>
    <property type="match status" value="1"/>
</dbReference>
<dbReference type="Pfam" id="PF01259">
    <property type="entry name" value="SAICAR_synt"/>
    <property type="match status" value="1"/>
</dbReference>
<dbReference type="SUPFAM" id="SSF56104">
    <property type="entry name" value="SAICAR synthase-like"/>
    <property type="match status" value="1"/>
</dbReference>
<dbReference type="PROSITE" id="PS01057">
    <property type="entry name" value="SAICAR_SYNTHETASE_1"/>
    <property type="match status" value="1"/>
</dbReference>
<dbReference type="PROSITE" id="PS01058">
    <property type="entry name" value="SAICAR_SYNTHETASE_2"/>
    <property type="match status" value="1"/>
</dbReference>